<comment type="function">
    <text>Protein kinase that is necessary for a-locus-dependent processes, such as conjugation tube formation, filament formation, and maintenance of filamentous growth, and for a-locus-independent processes, such as tumor induction and teliospore germination.</text>
</comment>
<comment type="catalytic activity">
    <reaction>
        <text>L-seryl-[protein] + ATP = O-phospho-L-seryl-[protein] + ADP + H(+)</text>
        <dbReference type="Rhea" id="RHEA:17989"/>
        <dbReference type="Rhea" id="RHEA-COMP:9863"/>
        <dbReference type="Rhea" id="RHEA-COMP:11604"/>
        <dbReference type="ChEBI" id="CHEBI:15378"/>
        <dbReference type="ChEBI" id="CHEBI:29999"/>
        <dbReference type="ChEBI" id="CHEBI:30616"/>
        <dbReference type="ChEBI" id="CHEBI:83421"/>
        <dbReference type="ChEBI" id="CHEBI:456216"/>
        <dbReference type="EC" id="2.7.12.2"/>
    </reaction>
</comment>
<comment type="catalytic activity">
    <reaction>
        <text>L-threonyl-[protein] + ATP = O-phospho-L-threonyl-[protein] + ADP + H(+)</text>
        <dbReference type="Rhea" id="RHEA:46608"/>
        <dbReference type="Rhea" id="RHEA-COMP:11060"/>
        <dbReference type="Rhea" id="RHEA-COMP:11605"/>
        <dbReference type="ChEBI" id="CHEBI:15378"/>
        <dbReference type="ChEBI" id="CHEBI:30013"/>
        <dbReference type="ChEBI" id="CHEBI:30616"/>
        <dbReference type="ChEBI" id="CHEBI:61977"/>
        <dbReference type="ChEBI" id="CHEBI:456216"/>
        <dbReference type="EC" id="2.7.12.2"/>
    </reaction>
</comment>
<comment type="catalytic activity">
    <reaction>
        <text>L-tyrosyl-[protein] + ATP = O-phospho-L-tyrosyl-[protein] + ADP + H(+)</text>
        <dbReference type="Rhea" id="RHEA:10596"/>
        <dbReference type="Rhea" id="RHEA-COMP:10136"/>
        <dbReference type="Rhea" id="RHEA-COMP:20101"/>
        <dbReference type="ChEBI" id="CHEBI:15378"/>
        <dbReference type="ChEBI" id="CHEBI:30616"/>
        <dbReference type="ChEBI" id="CHEBI:46858"/>
        <dbReference type="ChEBI" id="CHEBI:61978"/>
        <dbReference type="ChEBI" id="CHEBI:456216"/>
        <dbReference type="EC" id="2.7.12.2"/>
    </reaction>
</comment>
<comment type="similarity">
    <text evidence="4">Belongs to the protein kinase superfamily. STE Ser/Thr protein kinase family. MAP kinase kinase subfamily.</text>
</comment>
<proteinExistence type="inferred from homology"/>
<sequence>MLSSGAGSSIRKKRNFKGLQLAESPLASPVDASATTPSHKPGEGSAASNASTIGKSSAVTPGGSLALPVKNGLDTEPNSGANYHNKLTQQLANLELGVEYKLDLKNEDLKTLSELGAGNGGTVTKVLHEKSGTVMAKKVVFIDAKPSVRKQILRELQILHECNSPYIVSFYGAYLNEPHICMCMEFMQKDSLDGIYKKYGPISPEICGKIAVAVSHGLTYLYDVHRIIHRDVKPSNILVNGAGQIKICDFGVSGELINSIADTFVGTSTYMSPERIQGDQYSVKSDVWSLGVSIIELALGRFPFAENEEDDDSDADNNYTNEDLAGTLSPTKPAPMISLGQNEKQRRRKSKPAGVSLEGSSHQMSILDLLQHIVNEPPPKLPEGRFPKHMEEFVNLCLLKDPAKRPTPKDLTKHQYVIDADAAKVDLQAWADGMK</sequence>
<protein>
    <recommendedName>
        <fullName>Dual specificity protein kinase FUZ7</fullName>
        <ecNumber>2.7.12.2</ecNumber>
    </recommendedName>
</protein>
<keyword id="KW-0067">ATP-binding</keyword>
<keyword id="KW-0418">Kinase</keyword>
<keyword id="KW-0547">Nucleotide-binding</keyword>
<keyword id="KW-0597">Phosphoprotein</keyword>
<keyword id="KW-1185">Reference proteome</keyword>
<keyword id="KW-0723">Serine/threonine-protein kinase</keyword>
<keyword id="KW-0808">Transferase</keyword>
<keyword id="KW-0829">Tyrosine-protein kinase</keyword>
<evidence type="ECO:0000255" key="1">
    <source>
        <dbReference type="PROSITE-ProRule" id="PRU00159"/>
    </source>
</evidence>
<evidence type="ECO:0000255" key="2">
    <source>
        <dbReference type="PROSITE-ProRule" id="PRU10027"/>
    </source>
</evidence>
<evidence type="ECO:0000256" key="3">
    <source>
        <dbReference type="SAM" id="MobiDB-lite"/>
    </source>
</evidence>
<evidence type="ECO:0000305" key="4"/>
<feature type="chain" id="PRO_0000085955" description="Dual specificity protein kinase FUZ7">
    <location>
        <begin position="1"/>
        <end position="435"/>
    </location>
</feature>
<feature type="domain" description="Protein kinase" evidence="1">
    <location>
        <begin position="109"/>
        <end position="417"/>
    </location>
</feature>
<feature type="region of interest" description="Disordered" evidence="3">
    <location>
        <begin position="1"/>
        <end position="61"/>
    </location>
</feature>
<feature type="region of interest" description="Disordered" evidence="3">
    <location>
        <begin position="307"/>
        <end position="359"/>
    </location>
</feature>
<feature type="compositionally biased region" description="Polar residues" evidence="3">
    <location>
        <begin position="46"/>
        <end position="59"/>
    </location>
</feature>
<feature type="active site" description="Proton acceptor" evidence="1 2">
    <location>
        <position position="231"/>
    </location>
</feature>
<feature type="binding site" evidence="1">
    <location>
        <begin position="115"/>
        <end position="123"/>
    </location>
    <ligand>
        <name>ATP</name>
        <dbReference type="ChEBI" id="CHEBI:30616"/>
    </ligand>
</feature>
<feature type="binding site" evidence="1">
    <location>
        <position position="138"/>
    </location>
    <ligand>
        <name>ATP</name>
        <dbReference type="ChEBI" id="CHEBI:30616"/>
    </ligand>
</feature>
<feature type="sequence conflict" description="In Ref. 1; AAA62242." evidence="4" ref="1">
    <original>EL</original>
    <variation>DV</variation>
    <location>
        <begin position="296"/>
        <end position="297"/>
    </location>
</feature>
<feature type="sequence conflict" description="In Ref. 1; AAA62242." evidence="4" ref="1">
    <original>S</original>
    <variation>T</variation>
    <location>
        <position position="356"/>
    </location>
</feature>
<organism>
    <name type="scientific">Mycosarcoma maydis</name>
    <name type="common">Corn smut fungus</name>
    <name type="synonym">Ustilago maydis</name>
    <dbReference type="NCBI Taxonomy" id="5270"/>
    <lineage>
        <taxon>Eukaryota</taxon>
        <taxon>Fungi</taxon>
        <taxon>Dikarya</taxon>
        <taxon>Basidiomycota</taxon>
        <taxon>Ustilaginomycotina</taxon>
        <taxon>Ustilaginomycetes</taxon>
        <taxon>Ustilaginales</taxon>
        <taxon>Ustilaginaceae</taxon>
        <taxon>Mycosarcoma</taxon>
    </lineage>
</organism>
<gene>
    <name type="primary">FUZ7</name>
    <name type="ORF">UMAG_01514</name>
</gene>
<name>FUZ7_MYCMD</name>
<accession>Q99078</accession>
<accession>A0A0D1E2E5</accession>
<accession>Q4PEE9</accession>
<dbReference type="EC" id="2.7.12.2"/>
<dbReference type="EMBL" id="U07801">
    <property type="protein sequence ID" value="AAA62242.1"/>
    <property type="molecule type" value="Genomic_DNA"/>
</dbReference>
<dbReference type="EMBL" id="CM003142">
    <property type="protein sequence ID" value="KIS70344.1"/>
    <property type="molecule type" value="Genomic_DNA"/>
</dbReference>
<dbReference type="RefSeq" id="XP_011387552.1">
    <property type="nucleotide sequence ID" value="XM_011389250.1"/>
</dbReference>
<dbReference type="SMR" id="Q99078"/>
<dbReference type="FunCoup" id="Q99078">
    <property type="interactions" value="314"/>
</dbReference>
<dbReference type="STRING" id="237631.Q99078"/>
<dbReference type="EnsemblFungi" id="KIS70344">
    <property type="protein sequence ID" value="KIS70344"/>
    <property type="gene ID" value="UMAG_01514"/>
</dbReference>
<dbReference type="GeneID" id="23562500"/>
<dbReference type="KEGG" id="uma:UMAG_01514"/>
<dbReference type="VEuPathDB" id="FungiDB:UMAG_01514"/>
<dbReference type="eggNOG" id="KOG0581">
    <property type="taxonomic scope" value="Eukaryota"/>
</dbReference>
<dbReference type="HOGENOM" id="CLU_000288_63_23_1"/>
<dbReference type="InParanoid" id="Q99078"/>
<dbReference type="OMA" id="QMTLTEP"/>
<dbReference type="OrthoDB" id="10252354at2759"/>
<dbReference type="BRENDA" id="2.7.12.2">
    <property type="organism ID" value="6587"/>
</dbReference>
<dbReference type="PHI-base" id="PHI:2224"/>
<dbReference type="PHI-base" id="PHI:402"/>
<dbReference type="PHI-base" id="PHI:6068"/>
<dbReference type="Proteomes" id="UP000000561">
    <property type="component" value="Chromosome 3"/>
</dbReference>
<dbReference type="GO" id="GO:0005524">
    <property type="term" value="F:ATP binding"/>
    <property type="evidence" value="ECO:0007669"/>
    <property type="project" value="UniProtKB-KW"/>
</dbReference>
<dbReference type="GO" id="GO:0004708">
    <property type="term" value="F:MAP kinase kinase activity"/>
    <property type="evidence" value="ECO:0000318"/>
    <property type="project" value="GO_Central"/>
</dbReference>
<dbReference type="GO" id="GO:0106310">
    <property type="term" value="F:protein serine kinase activity"/>
    <property type="evidence" value="ECO:0007669"/>
    <property type="project" value="RHEA"/>
</dbReference>
<dbReference type="GO" id="GO:0004674">
    <property type="term" value="F:protein serine/threonine kinase activity"/>
    <property type="evidence" value="ECO:0007669"/>
    <property type="project" value="UniProtKB-KW"/>
</dbReference>
<dbReference type="GO" id="GO:0004713">
    <property type="term" value="F:protein tyrosine kinase activity"/>
    <property type="evidence" value="ECO:0007669"/>
    <property type="project" value="UniProtKB-KW"/>
</dbReference>
<dbReference type="GO" id="GO:0000165">
    <property type="term" value="P:MAPK cascade"/>
    <property type="evidence" value="ECO:0000318"/>
    <property type="project" value="GO_Central"/>
</dbReference>
<dbReference type="CDD" id="cd06620">
    <property type="entry name" value="PKc_Byr1_like"/>
    <property type="match status" value="1"/>
</dbReference>
<dbReference type="FunFam" id="3.30.200.20:FF:000040">
    <property type="entry name" value="Dual specificity mitogen-activated protein kinase kinase"/>
    <property type="match status" value="1"/>
</dbReference>
<dbReference type="Gene3D" id="3.30.200.20">
    <property type="entry name" value="Phosphorylase Kinase, domain 1"/>
    <property type="match status" value="1"/>
</dbReference>
<dbReference type="Gene3D" id="1.10.510.10">
    <property type="entry name" value="Transferase(Phosphotransferase) domain 1"/>
    <property type="match status" value="1"/>
</dbReference>
<dbReference type="InterPro" id="IPR049613">
    <property type="entry name" value="Byr1-like_cat"/>
</dbReference>
<dbReference type="InterPro" id="IPR011009">
    <property type="entry name" value="Kinase-like_dom_sf"/>
</dbReference>
<dbReference type="InterPro" id="IPR050915">
    <property type="entry name" value="MAP_kinase_kinase"/>
</dbReference>
<dbReference type="InterPro" id="IPR000719">
    <property type="entry name" value="Prot_kinase_dom"/>
</dbReference>
<dbReference type="InterPro" id="IPR017441">
    <property type="entry name" value="Protein_kinase_ATP_BS"/>
</dbReference>
<dbReference type="InterPro" id="IPR008271">
    <property type="entry name" value="Ser/Thr_kinase_AS"/>
</dbReference>
<dbReference type="PANTHER" id="PTHR47448">
    <property type="entry name" value="DUAL SPECIFICITY MITOGEN-ACTIVATED PROTEIN KINASE KINASE DSOR1-LIKE PROTEIN"/>
    <property type="match status" value="1"/>
</dbReference>
<dbReference type="PANTHER" id="PTHR47448:SF1">
    <property type="entry name" value="SERINE_THREONINE-PROTEIN KINASE STE7 HOMOLOG"/>
    <property type="match status" value="1"/>
</dbReference>
<dbReference type="Pfam" id="PF00069">
    <property type="entry name" value="Pkinase"/>
    <property type="match status" value="1"/>
</dbReference>
<dbReference type="SMART" id="SM00220">
    <property type="entry name" value="S_TKc"/>
    <property type="match status" value="1"/>
</dbReference>
<dbReference type="SUPFAM" id="SSF56112">
    <property type="entry name" value="Protein kinase-like (PK-like)"/>
    <property type="match status" value="1"/>
</dbReference>
<dbReference type="PROSITE" id="PS00107">
    <property type="entry name" value="PROTEIN_KINASE_ATP"/>
    <property type="match status" value="1"/>
</dbReference>
<dbReference type="PROSITE" id="PS50011">
    <property type="entry name" value="PROTEIN_KINASE_DOM"/>
    <property type="match status" value="1"/>
</dbReference>
<dbReference type="PROSITE" id="PS00108">
    <property type="entry name" value="PROTEIN_KINASE_ST"/>
    <property type="match status" value="1"/>
</dbReference>
<reference key="1">
    <citation type="journal article" date="1994" name="Genes Dev.">
        <title>Identification of fuz7, a Ustilago maydis MEK/MAPKK homolog required for a-locus-dependent and -independent steps in the fungal life cycle.</title>
        <authorList>
            <person name="Banuett F."/>
            <person name="Herskowitz I."/>
        </authorList>
    </citation>
    <scope>NUCLEOTIDE SEQUENCE [GENOMIC DNA]</scope>
    <source>
        <strain>FBD12</strain>
    </source>
</reference>
<reference key="2">
    <citation type="journal article" date="2006" name="Nature">
        <title>Insights from the genome of the biotrophic fungal plant pathogen Ustilago maydis.</title>
        <authorList>
            <person name="Kaemper J."/>
            <person name="Kahmann R."/>
            <person name="Boelker M."/>
            <person name="Ma L.-J."/>
            <person name="Brefort T."/>
            <person name="Saville B.J."/>
            <person name="Banuett F."/>
            <person name="Kronstad J.W."/>
            <person name="Gold S.E."/>
            <person name="Mueller O."/>
            <person name="Perlin M.H."/>
            <person name="Woesten H.A.B."/>
            <person name="de Vries R."/>
            <person name="Ruiz-Herrera J."/>
            <person name="Reynaga-Pena C.G."/>
            <person name="Snetselaar K."/>
            <person name="McCann M."/>
            <person name="Perez-Martin J."/>
            <person name="Feldbruegge M."/>
            <person name="Basse C.W."/>
            <person name="Steinberg G."/>
            <person name="Ibeas J.I."/>
            <person name="Holloman W."/>
            <person name="Guzman P."/>
            <person name="Farman M.L."/>
            <person name="Stajich J.E."/>
            <person name="Sentandreu R."/>
            <person name="Gonzalez-Prieto J.M."/>
            <person name="Kennell J.C."/>
            <person name="Molina L."/>
            <person name="Schirawski J."/>
            <person name="Mendoza-Mendoza A."/>
            <person name="Greilinger D."/>
            <person name="Muench K."/>
            <person name="Roessel N."/>
            <person name="Scherer M."/>
            <person name="Vranes M."/>
            <person name="Ladendorf O."/>
            <person name="Vincon V."/>
            <person name="Fuchs U."/>
            <person name="Sandrock B."/>
            <person name="Meng S."/>
            <person name="Ho E.C.H."/>
            <person name="Cahill M.J."/>
            <person name="Boyce K.J."/>
            <person name="Klose J."/>
            <person name="Klosterman S.J."/>
            <person name="Deelstra H.J."/>
            <person name="Ortiz-Castellanos L."/>
            <person name="Li W."/>
            <person name="Sanchez-Alonso P."/>
            <person name="Schreier P.H."/>
            <person name="Haeuser-Hahn I."/>
            <person name="Vaupel M."/>
            <person name="Koopmann E."/>
            <person name="Friedrich G."/>
            <person name="Voss H."/>
            <person name="Schlueter T."/>
            <person name="Margolis J."/>
            <person name="Platt D."/>
            <person name="Swimmer C."/>
            <person name="Gnirke A."/>
            <person name="Chen F."/>
            <person name="Vysotskaia V."/>
            <person name="Mannhaupt G."/>
            <person name="Gueldener U."/>
            <person name="Muensterkoetter M."/>
            <person name="Haase D."/>
            <person name="Oesterheld M."/>
            <person name="Mewes H.-W."/>
            <person name="Mauceli E.W."/>
            <person name="DeCaprio D."/>
            <person name="Wade C.M."/>
            <person name="Butler J."/>
            <person name="Young S.K."/>
            <person name="Jaffe D.B."/>
            <person name="Calvo S.E."/>
            <person name="Nusbaum C."/>
            <person name="Galagan J.E."/>
            <person name="Birren B.W."/>
        </authorList>
    </citation>
    <scope>NUCLEOTIDE SEQUENCE [LARGE SCALE GENOMIC DNA]</scope>
    <source>
        <strain>DSM 14603 / FGSC 9021 / UM521</strain>
    </source>
</reference>
<reference key="3">
    <citation type="submission" date="2014-09" db="EMBL/GenBank/DDBJ databases">
        <authorList>
            <person name="Gueldener U."/>
            <person name="Muensterkoetter M."/>
            <person name="Walter M.C."/>
            <person name="Mannhaupt G."/>
            <person name="Kahmann R."/>
        </authorList>
    </citation>
    <scope>GENOME REANNOTATION</scope>
    <source>
        <strain>DSM 14603 / FGSC 9021 / UM521</strain>
    </source>
</reference>